<evidence type="ECO:0000255" key="1">
    <source>
        <dbReference type="HAMAP-Rule" id="MF_01523"/>
    </source>
</evidence>
<comment type="function">
    <text evidence="1">Specifically methylates the guanosine in position 1516 of 16S rRNA.</text>
</comment>
<comment type="catalytic activity">
    <reaction evidence="1">
        <text>guanosine(1516) in 16S rRNA + S-adenosyl-L-methionine = N(2)-methylguanosine(1516) in 16S rRNA + S-adenosyl-L-homocysteine + H(+)</text>
        <dbReference type="Rhea" id="RHEA:43220"/>
        <dbReference type="Rhea" id="RHEA-COMP:10412"/>
        <dbReference type="Rhea" id="RHEA-COMP:10413"/>
        <dbReference type="ChEBI" id="CHEBI:15378"/>
        <dbReference type="ChEBI" id="CHEBI:57856"/>
        <dbReference type="ChEBI" id="CHEBI:59789"/>
        <dbReference type="ChEBI" id="CHEBI:74269"/>
        <dbReference type="ChEBI" id="CHEBI:74481"/>
        <dbReference type="EC" id="2.1.1.242"/>
    </reaction>
</comment>
<comment type="subcellular location">
    <subcellularLocation>
        <location evidence="1">Cytoplasm</location>
    </subcellularLocation>
</comment>
<comment type="similarity">
    <text evidence="1">Belongs to the methyltransferase superfamily. RsmJ family.</text>
</comment>
<accession>A1RQ25</accession>
<dbReference type="EC" id="2.1.1.242" evidence="1"/>
<dbReference type="EMBL" id="CP000503">
    <property type="protein sequence ID" value="ABM26770.1"/>
    <property type="molecule type" value="Genomic_DNA"/>
</dbReference>
<dbReference type="RefSeq" id="WP_011791192.1">
    <property type="nucleotide sequence ID" value="NC_008750.1"/>
</dbReference>
<dbReference type="SMR" id="A1RQ25"/>
<dbReference type="KEGG" id="shw:Sputw3181_3966"/>
<dbReference type="HOGENOM" id="CLU_076324_0_1_6"/>
<dbReference type="Proteomes" id="UP000002597">
    <property type="component" value="Chromosome"/>
</dbReference>
<dbReference type="GO" id="GO:0005737">
    <property type="term" value="C:cytoplasm"/>
    <property type="evidence" value="ECO:0007669"/>
    <property type="project" value="UniProtKB-SubCell"/>
</dbReference>
<dbReference type="GO" id="GO:0008990">
    <property type="term" value="F:rRNA (guanine-N2-)-methyltransferase activity"/>
    <property type="evidence" value="ECO:0007669"/>
    <property type="project" value="UniProtKB-UniRule"/>
</dbReference>
<dbReference type="CDD" id="cd02440">
    <property type="entry name" value="AdoMet_MTases"/>
    <property type="match status" value="1"/>
</dbReference>
<dbReference type="Gene3D" id="3.40.50.150">
    <property type="entry name" value="Vaccinia Virus protein VP39"/>
    <property type="match status" value="1"/>
</dbReference>
<dbReference type="Gene3D" id="3.40.1630.10">
    <property type="entry name" value="YhiQ-like domain"/>
    <property type="match status" value="1"/>
</dbReference>
<dbReference type="HAMAP" id="MF_01523">
    <property type="entry name" value="16SrRNA_methyltr_J"/>
    <property type="match status" value="1"/>
</dbReference>
<dbReference type="InterPro" id="IPR007536">
    <property type="entry name" value="16SrRNA_methylTrfase_J"/>
</dbReference>
<dbReference type="InterPro" id="IPR029063">
    <property type="entry name" value="SAM-dependent_MTases_sf"/>
</dbReference>
<dbReference type="PANTHER" id="PTHR36112">
    <property type="entry name" value="RIBOSOMAL RNA SMALL SUBUNIT METHYLTRANSFERASE J"/>
    <property type="match status" value="1"/>
</dbReference>
<dbReference type="PANTHER" id="PTHR36112:SF1">
    <property type="entry name" value="RIBOSOMAL RNA SMALL SUBUNIT METHYLTRANSFERASE J"/>
    <property type="match status" value="1"/>
</dbReference>
<dbReference type="Pfam" id="PF04445">
    <property type="entry name" value="SAM_MT"/>
    <property type="match status" value="1"/>
</dbReference>
<dbReference type="SUPFAM" id="SSF53335">
    <property type="entry name" value="S-adenosyl-L-methionine-dependent methyltransferases"/>
    <property type="match status" value="1"/>
</dbReference>
<reference key="1">
    <citation type="submission" date="2006-12" db="EMBL/GenBank/DDBJ databases">
        <title>Complete sequence of Shewanella sp. W3-18-1.</title>
        <authorList>
            <consortium name="US DOE Joint Genome Institute"/>
            <person name="Copeland A."/>
            <person name="Lucas S."/>
            <person name="Lapidus A."/>
            <person name="Barry K."/>
            <person name="Detter J.C."/>
            <person name="Glavina del Rio T."/>
            <person name="Hammon N."/>
            <person name="Israni S."/>
            <person name="Dalin E."/>
            <person name="Tice H."/>
            <person name="Pitluck S."/>
            <person name="Chain P."/>
            <person name="Malfatti S."/>
            <person name="Shin M."/>
            <person name="Vergez L."/>
            <person name="Schmutz J."/>
            <person name="Larimer F."/>
            <person name="Land M."/>
            <person name="Hauser L."/>
            <person name="Kyrpides N."/>
            <person name="Lykidis A."/>
            <person name="Tiedje J."/>
            <person name="Richardson P."/>
        </authorList>
    </citation>
    <scope>NUCLEOTIDE SEQUENCE [LARGE SCALE GENOMIC DNA]</scope>
    <source>
        <strain>W3-18-1</strain>
    </source>
</reference>
<protein>
    <recommendedName>
        <fullName evidence="1">Ribosomal RNA small subunit methyltransferase J</fullName>
        <ecNumber evidence="1">2.1.1.242</ecNumber>
    </recommendedName>
    <alternativeName>
        <fullName evidence="1">16S rRNA m2G1516 methyltransferase</fullName>
    </alternativeName>
    <alternativeName>
        <fullName evidence="1">rRNA (guanine-N(2)-)-methyltransferase</fullName>
    </alternativeName>
</protein>
<organism>
    <name type="scientific">Shewanella sp. (strain W3-18-1)</name>
    <dbReference type="NCBI Taxonomy" id="351745"/>
    <lineage>
        <taxon>Bacteria</taxon>
        <taxon>Pseudomonadati</taxon>
        <taxon>Pseudomonadota</taxon>
        <taxon>Gammaproteobacteria</taxon>
        <taxon>Alteromonadales</taxon>
        <taxon>Shewanellaceae</taxon>
        <taxon>Shewanella</taxon>
    </lineage>
</organism>
<name>RSMJ_SHESW</name>
<gene>
    <name evidence="1" type="primary">rsmJ</name>
    <name type="ordered locus">Sputw3181_3966</name>
</gene>
<proteinExistence type="inferred from homology"/>
<sequence length="259" mass="28723">MTAILLVRRQPVTPIFFNQQYPTLVDICARWQLIYDANAPFELRFESDSLTLHKRDEPKLDGILVDFVTGAVAHRRKFGGGRGQSIAKAVGLKQGVTPSVVDGTAGLGRDAFVLASLGCTVTMVERHPVVAALLEDGLRRAYQDAEIGDWMHERMQLFHGSSLEALSKLEQEVDVVYLDPMYPHRDKSALVKKEMRVFQSLVGADLDADGLLAPALALATKRVVVKRPDYAEDLDGVKPSMVIDTKKNRFDVYVKAAMK</sequence>
<keyword id="KW-0963">Cytoplasm</keyword>
<keyword id="KW-0489">Methyltransferase</keyword>
<keyword id="KW-0698">rRNA processing</keyword>
<keyword id="KW-0949">S-adenosyl-L-methionine</keyword>
<keyword id="KW-0808">Transferase</keyword>
<feature type="chain" id="PRO_0000292650" description="Ribosomal RNA small subunit methyltransferase J">
    <location>
        <begin position="1"/>
        <end position="259"/>
    </location>
</feature>
<feature type="binding site" evidence="1">
    <location>
        <begin position="109"/>
        <end position="110"/>
    </location>
    <ligand>
        <name>S-adenosyl-L-methionine</name>
        <dbReference type="ChEBI" id="CHEBI:59789"/>
    </ligand>
</feature>
<feature type="binding site" evidence="1">
    <location>
        <begin position="125"/>
        <end position="126"/>
    </location>
    <ligand>
        <name>S-adenosyl-L-methionine</name>
        <dbReference type="ChEBI" id="CHEBI:59789"/>
    </ligand>
</feature>
<feature type="binding site" evidence="1">
    <location>
        <begin position="161"/>
        <end position="162"/>
    </location>
    <ligand>
        <name>S-adenosyl-L-methionine</name>
        <dbReference type="ChEBI" id="CHEBI:59789"/>
    </ligand>
</feature>
<feature type="binding site" evidence="1">
    <location>
        <position position="179"/>
    </location>
    <ligand>
        <name>S-adenosyl-L-methionine</name>
        <dbReference type="ChEBI" id="CHEBI:59789"/>
    </ligand>
</feature>